<dbReference type="EC" id="2.8.1.10" evidence="1"/>
<dbReference type="EMBL" id="AE008692">
    <property type="protein sequence ID" value="AAV89362.1"/>
    <property type="status" value="ALT_INIT"/>
    <property type="molecule type" value="Genomic_DNA"/>
</dbReference>
<dbReference type="SMR" id="Q5NPJ8"/>
<dbReference type="STRING" id="264203.ZMO0738"/>
<dbReference type="KEGG" id="zmo:ZMO0738"/>
<dbReference type="eggNOG" id="COG2022">
    <property type="taxonomic scope" value="Bacteria"/>
</dbReference>
<dbReference type="HOGENOM" id="CLU_062233_1_1_5"/>
<dbReference type="UniPathway" id="UPA00060"/>
<dbReference type="Proteomes" id="UP000001173">
    <property type="component" value="Chromosome"/>
</dbReference>
<dbReference type="GO" id="GO:0005737">
    <property type="term" value="C:cytoplasm"/>
    <property type="evidence" value="ECO:0007669"/>
    <property type="project" value="UniProtKB-SubCell"/>
</dbReference>
<dbReference type="GO" id="GO:1990107">
    <property type="term" value="F:thiazole synthase activity"/>
    <property type="evidence" value="ECO:0007669"/>
    <property type="project" value="UniProtKB-EC"/>
</dbReference>
<dbReference type="GO" id="GO:0009229">
    <property type="term" value="P:thiamine diphosphate biosynthetic process"/>
    <property type="evidence" value="ECO:0007669"/>
    <property type="project" value="UniProtKB-UniRule"/>
</dbReference>
<dbReference type="CDD" id="cd04728">
    <property type="entry name" value="ThiG"/>
    <property type="match status" value="1"/>
</dbReference>
<dbReference type="Gene3D" id="3.20.20.70">
    <property type="entry name" value="Aldolase class I"/>
    <property type="match status" value="1"/>
</dbReference>
<dbReference type="HAMAP" id="MF_00443">
    <property type="entry name" value="ThiG"/>
    <property type="match status" value="1"/>
</dbReference>
<dbReference type="InterPro" id="IPR013785">
    <property type="entry name" value="Aldolase_TIM"/>
</dbReference>
<dbReference type="InterPro" id="IPR033983">
    <property type="entry name" value="Thiazole_synthase_ThiG"/>
</dbReference>
<dbReference type="InterPro" id="IPR008867">
    <property type="entry name" value="ThiG"/>
</dbReference>
<dbReference type="PANTHER" id="PTHR34266">
    <property type="entry name" value="THIAZOLE SYNTHASE"/>
    <property type="match status" value="1"/>
</dbReference>
<dbReference type="PANTHER" id="PTHR34266:SF2">
    <property type="entry name" value="THIAZOLE SYNTHASE"/>
    <property type="match status" value="1"/>
</dbReference>
<dbReference type="Pfam" id="PF05690">
    <property type="entry name" value="ThiG"/>
    <property type="match status" value="1"/>
</dbReference>
<dbReference type="SUPFAM" id="SSF110399">
    <property type="entry name" value="ThiG-like"/>
    <property type="match status" value="1"/>
</dbReference>
<organism>
    <name type="scientific">Zymomonas mobilis subsp. mobilis (strain ATCC 31821 / ZM4 / CP4)</name>
    <dbReference type="NCBI Taxonomy" id="264203"/>
    <lineage>
        <taxon>Bacteria</taxon>
        <taxon>Pseudomonadati</taxon>
        <taxon>Pseudomonadota</taxon>
        <taxon>Alphaproteobacteria</taxon>
        <taxon>Sphingomonadales</taxon>
        <taxon>Zymomonadaceae</taxon>
        <taxon>Zymomonas</taxon>
    </lineage>
</organism>
<feature type="chain" id="PRO_0000162884" description="Thiazole synthase">
    <location>
        <begin position="1"/>
        <end position="257"/>
    </location>
</feature>
<feature type="active site" description="Schiff-base intermediate with DXP" evidence="1">
    <location>
        <position position="100"/>
    </location>
</feature>
<feature type="binding site" evidence="1">
    <location>
        <position position="161"/>
    </location>
    <ligand>
        <name>1-deoxy-D-xylulose 5-phosphate</name>
        <dbReference type="ChEBI" id="CHEBI:57792"/>
    </ligand>
</feature>
<feature type="binding site" evidence="1">
    <location>
        <begin position="187"/>
        <end position="188"/>
    </location>
    <ligand>
        <name>1-deoxy-D-xylulose 5-phosphate</name>
        <dbReference type="ChEBI" id="CHEBI:57792"/>
    </ligand>
</feature>
<feature type="binding site" evidence="1">
    <location>
        <begin position="209"/>
        <end position="210"/>
    </location>
    <ligand>
        <name>1-deoxy-D-xylulose 5-phosphate</name>
        <dbReference type="ChEBI" id="CHEBI:57792"/>
    </ligand>
</feature>
<gene>
    <name evidence="1" type="primary">thiG</name>
    <name type="ordered locus">ZMO0738</name>
</gene>
<proteinExistence type="inferred from homology"/>
<evidence type="ECO:0000255" key="1">
    <source>
        <dbReference type="HAMAP-Rule" id="MF_00443"/>
    </source>
</evidence>
<evidence type="ECO:0000305" key="2"/>
<comment type="function">
    <text evidence="1">Catalyzes the rearrangement of 1-deoxy-D-xylulose 5-phosphate (DXP) to produce the thiazole phosphate moiety of thiamine. Sulfur is provided by the thiocarboxylate moiety of the carrier protein ThiS. In vitro, sulfur can be provided by H(2)S.</text>
</comment>
<comment type="catalytic activity">
    <reaction evidence="1">
        <text>[ThiS sulfur-carrier protein]-C-terminal-Gly-aminoethanethioate + 2-iminoacetate + 1-deoxy-D-xylulose 5-phosphate = [ThiS sulfur-carrier protein]-C-terminal Gly-Gly + 2-[(2R,5Z)-2-carboxy-4-methylthiazol-5(2H)-ylidene]ethyl phosphate + 2 H2O + H(+)</text>
        <dbReference type="Rhea" id="RHEA:26297"/>
        <dbReference type="Rhea" id="RHEA-COMP:12909"/>
        <dbReference type="Rhea" id="RHEA-COMP:19908"/>
        <dbReference type="ChEBI" id="CHEBI:15377"/>
        <dbReference type="ChEBI" id="CHEBI:15378"/>
        <dbReference type="ChEBI" id="CHEBI:57792"/>
        <dbReference type="ChEBI" id="CHEBI:62899"/>
        <dbReference type="ChEBI" id="CHEBI:77846"/>
        <dbReference type="ChEBI" id="CHEBI:90778"/>
        <dbReference type="ChEBI" id="CHEBI:232372"/>
        <dbReference type="EC" id="2.8.1.10"/>
    </reaction>
</comment>
<comment type="pathway">
    <text evidence="1">Cofactor biosynthesis; thiamine diphosphate biosynthesis.</text>
</comment>
<comment type="subunit">
    <text evidence="1">Homotetramer. Forms heterodimers with either ThiH or ThiS.</text>
</comment>
<comment type="subcellular location">
    <subcellularLocation>
        <location evidence="1">Cytoplasm</location>
    </subcellularLocation>
</comment>
<comment type="similarity">
    <text evidence="1">Belongs to the ThiG family.</text>
</comment>
<comment type="sequence caution" evidence="2">
    <conflict type="erroneous initiation">
        <sequence resource="EMBL-CDS" id="AAV89362"/>
    </conflict>
</comment>
<sequence>MSDDSWSVAGHTFKSRLIVGTGKYKDYAQNAAAVKAAGAEIVTVAVRRVNLTDTSAPMLTDYIDPKEYCFLPNTAGCFNAEEAVRTLRLAREAGGWTLVKLEVLGEARTLYPDMVETLKATEILVKEGFQPMVYCSDDPIMAKRLEDAGAVAIMPLGAPIGSGLGLQNPVMLRLIVEAANVPVLVDAGVGTASDAAVALELGCDAVLMNTAIAEAKNPVLMAQAMKSAVEAGRMAYLAGRMGKRMYADPSSPLAGLI</sequence>
<reference key="1">
    <citation type="journal article" date="2005" name="Nat. Biotechnol.">
        <title>The genome sequence of the ethanologenic bacterium Zymomonas mobilis ZM4.</title>
        <authorList>
            <person name="Seo J.-S."/>
            <person name="Chong H."/>
            <person name="Park H.S."/>
            <person name="Yoon K.-O."/>
            <person name="Jung C."/>
            <person name="Kim J.J."/>
            <person name="Hong J.H."/>
            <person name="Kim H."/>
            <person name="Kim J.-H."/>
            <person name="Kil J.-I."/>
            <person name="Park C.J."/>
            <person name="Oh H.-M."/>
            <person name="Lee J.-S."/>
            <person name="Jin S.-J."/>
            <person name="Um H.-W."/>
            <person name="Lee H.-J."/>
            <person name="Oh S.-J."/>
            <person name="Kim J.Y."/>
            <person name="Kang H.L."/>
            <person name="Lee S.Y."/>
            <person name="Lee K.J."/>
            <person name="Kang H.S."/>
        </authorList>
    </citation>
    <scope>NUCLEOTIDE SEQUENCE [LARGE SCALE GENOMIC DNA]</scope>
    <source>
        <strain>ATCC 31821 / ZM4 / CP4</strain>
    </source>
</reference>
<accession>Q5NPJ8</accession>
<keyword id="KW-0963">Cytoplasm</keyword>
<keyword id="KW-1185">Reference proteome</keyword>
<keyword id="KW-0704">Schiff base</keyword>
<keyword id="KW-0784">Thiamine biosynthesis</keyword>
<keyword id="KW-0808">Transferase</keyword>
<name>THIG_ZYMMO</name>
<protein>
    <recommendedName>
        <fullName evidence="1">Thiazole synthase</fullName>
        <ecNumber evidence="1">2.8.1.10</ecNumber>
    </recommendedName>
</protein>